<comment type="function">
    <text evidence="1">Involved in pre-mRNA splicing, specifically in spliceosome disassembly during late-stage splicing events. Intron turnover seems to proceed through reactions in two lariat-intron associated complexes termed Intron Large (IL) and Intron Small (IS). In cooperation with DHX15 seems to mediate the transition of the U2, U5 and U6 snRNP-containing IL complex to the snRNP-free IS complex leading to efficient debranching and turnover of excised introns. May play a role in the differentiation of ameloblasts and odontoblasts or in the forming of the enamel extracellular matrix (By similarity).</text>
</comment>
<comment type="subunit">
    <text evidence="1">Identified in the spliceosome C complex. Found in the Intron Large (IL) complex, a post-mRNA release spliceosomal complex containing the excised intron, U2, U5 and U6 snRNPs, and splicing factors. Interacts with TUFT1. Interacts with DHX15; indicative for a recruitment of DHX15 to the IL complex. Interacts with GCFC2 (By similarity).</text>
</comment>
<comment type="subcellular location">
    <subcellularLocation>
        <location evidence="1">Cytoplasm</location>
    </subcellularLocation>
    <subcellularLocation>
        <location evidence="1">Nucleus</location>
    </subcellularLocation>
    <text evidence="1">In the nucleus localizes to unique speckle domains in close proximity to nuclear speckles and not identical to paraspeckles.</text>
</comment>
<comment type="alternative products">
    <event type="alternative splicing"/>
    <isoform>
        <id>A1XD95-1</id>
        <name>1</name>
        <sequence type="displayed"/>
    </isoform>
    <isoform>
        <id>A1XD95-2</id>
        <name>2</name>
        <sequence type="described" ref="VSP_034413"/>
    </isoform>
</comment>
<comment type="similarity">
    <text evidence="7">Belongs to the TFP11/STIP family.</text>
</comment>
<comment type="sequence caution" evidence="7">
    <conflict type="frameshift">
        <sequence resource="EMBL-CDS" id="BAE00286"/>
    </conflict>
</comment>
<organism>
    <name type="scientific">Macaca fascicularis</name>
    <name type="common">Crab-eating macaque</name>
    <name type="synonym">Cynomolgus monkey</name>
    <dbReference type="NCBI Taxonomy" id="9541"/>
    <lineage>
        <taxon>Eukaryota</taxon>
        <taxon>Metazoa</taxon>
        <taxon>Chordata</taxon>
        <taxon>Craniata</taxon>
        <taxon>Vertebrata</taxon>
        <taxon>Euteleostomi</taxon>
        <taxon>Mammalia</taxon>
        <taxon>Eutheria</taxon>
        <taxon>Euarchontoglires</taxon>
        <taxon>Primates</taxon>
        <taxon>Haplorrhini</taxon>
        <taxon>Catarrhini</taxon>
        <taxon>Cercopithecidae</taxon>
        <taxon>Cercopithecinae</taxon>
        <taxon>Macaca</taxon>
    </lineage>
</organism>
<accession>A1XD95</accession>
<accession>Q4R9D5</accession>
<keyword id="KW-0025">Alternative splicing</keyword>
<keyword id="KW-0091">Biomineralization</keyword>
<keyword id="KW-0963">Cytoplasm</keyword>
<keyword id="KW-0507">mRNA processing</keyword>
<keyword id="KW-0508">mRNA splicing</keyword>
<keyword id="KW-0539">Nucleus</keyword>
<keyword id="KW-0597">Phosphoprotein</keyword>
<keyword id="KW-1185">Reference proteome</keyword>
<keyword id="KW-0747">Spliceosome</keyword>
<sequence>MSLSHLYRDGEGRIDDDDDERENFEITDWDLQNEFNPNRQRHWQTKEEATYGVWAERDSDDERPSFGGKRARDYSAPVNFISAGLKKGAAEEAELEDSDDEERPVKQDDFPKDFGPRKLKTGGNFKPSQKGFAGGTKSFMDFGSWERHTKGIGQKLLQKMGYVPGRGLGKNAQGIINPIEAKQRKGKGAVGAYGSERTTQSMQDFPVVDSEEEAEEEFQKGLSQWRKDPSGSKKKPKYSYKTVEELKAKGRISKKLTAPQKELSQVKVIDMTGREQKVYYSYSQISHKHNVPDDGLPLQSQQLPQSGKEAKAPGFALPELEHNLQLLIDLTEQEIIQNDRQLQYERDMVVNLFHELEKMTEVLDHEERVISNLSKVLEMVEECERRMQPDCSNPLTLDECARIFETLQDKYYEEYRMSDRVDLAVAIVYPLMKEYFKEWDPLKDCTYGTEIISKWKSLLENDQLLSHGGQDLSADAFHRLIWEVWMPFVRNIVTQWQPRNCDPMVDFLDSWVHIIPVWILDNILDQLIFPKLQKEVENWNPLTDTVPIHSWIHPWLPLMQARLEPLYSPIRSKLSSALQKWHPSDSSAKLILQPWKDVFTPGSWEAFMVKNIVPKLGMCLGELVINPHQQHMDAFYWVIDWEGMISVSSLVGLLEKHFFPKWLQVLCSWLSNSPNYEEITKWYLGWKSMFSDQVLAHPSVKDKFNEALDIMNRAVSSNVGAYMQPGARENIAYLTHTERRKDFQYEATRERREAENMAQRGIGVAASSVPMNFKDLIETKAEEHNIVFMPVIGKRHEGKQLYTFGRIVIYIDRGVVFVQGEKTWVPTSLQSLIDMAK</sequence>
<evidence type="ECO:0000250" key="1"/>
<evidence type="ECO:0000250" key="2">
    <source>
        <dbReference type="UniProtKB" id="Q5U2Y6"/>
    </source>
</evidence>
<evidence type="ECO:0000250" key="3">
    <source>
        <dbReference type="UniProtKB" id="Q9UBB9"/>
    </source>
</evidence>
<evidence type="ECO:0000255" key="4">
    <source>
        <dbReference type="PROSITE-ProRule" id="PRU00092"/>
    </source>
</evidence>
<evidence type="ECO:0000256" key="5">
    <source>
        <dbReference type="SAM" id="MobiDB-lite"/>
    </source>
</evidence>
<evidence type="ECO:0000303" key="6">
    <source ref="2"/>
</evidence>
<evidence type="ECO:0000305" key="7"/>
<gene>
    <name type="primary">TFIP11</name>
    <name type="synonym">STIP</name>
    <name type="ORF">QtsA-10256</name>
</gene>
<feature type="chain" id="PRO_0000342271" description="Tuftelin-interacting protein 11">
    <location>
        <begin position="1"/>
        <end position="837"/>
    </location>
</feature>
<feature type="domain" description="G-patch" evidence="4">
    <location>
        <begin position="149"/>
        <end position="195"/>
    </location>
</feature>
<feature type="region of interest" description="Disordered" evidence="5">
    <location>
        <begin position="1"/>
        <end position="21"/>
    </location>
</feature>
<feature type="region of interest" description="Disordered" evidence="5">
    <location>
        <begin position="53"/>
        <end position="72"/>
    </location>
</feature>
<feature type="region of interest" description="Disordered" evidence="5">
    <location>
        <begin position="85"/>
        <end position="133"/>
    </location>
</feature>
<feature type="region of interest" description="Disordered" evidence="5">
    <location>
        <begin position="179"/>
        <end position="236"/>
    </location>
</feature>
<feature type="region of interest" description="Required for nuclear speckle localization" evidence="1">
    <location>
        <begin position="710"/>
        <end position="734"/>
    </location>
</feature>
<feature type="short sequence motif" description="Nuclear localization signal" evidence="1">
    <location>
        <begin position="700"/>
        <end position="705"/>
    </location>
</feature>
<feature type="compositionally biased region" description="Basic and acidic residues" evidence="5">
    <location>
        <begin position="1"/>
        <end position="13"/>
    </location>
</feature>
<feature type="compositionally biased region" description="Basic and acidic residues" evidence="5">
    <location>
        <begin position="53"/>
        <end position="64"/>
    </location>
</feature>
<feature type="compositionally biased region" description="Acidic residues" evidence="5">
    <location>
        <begin position="91"/>
        <end position="102"/>
    </location>
</feature>
<feature type="compositionally biased region" description="Basic and acidic residues" evidence="5">
    <location>
        <begin position="103"/>
        <end position="116"/>
    </location>
</feature>
<feature type="modified residue" description="Phosphoserine" evidence="2">
    <location>
        <position position="2"/>
    </location>
</feature>
<feature type="modified residue" description="Phosphoserine" evidence="3">
    <location>
        <position position="59"/>
    </location>
</feature>
<feature type="modified residue" description="Phosphoserine" evidence="3">
    <location>
        <position position="98"/>
    </location>
</feature>
<feature type="modified residue" description="Phosphoserine" evidence="3">
    <location>
        <position position="144"/>
    </location>
</feature>
<feature type="modified residue" description="Phosphoserine" evidence="3">
    <location>
        <position position="210"/>
    </location>
</feature>
<feature type="splice variant" id="VSP_034413" description="In isoform 2." evidence="6">
    <location>
        <begin position="18"/>
        <end position="59"/>
    </location>
</feature>
<name>TFP11_MACFA</name>
<dbReference type="EMBL" id="DQ342028">
    <property type="protein sequence ID" value="ABC69920.1"/>
    <property type="molecule type" value="mRNA"/>
</dbReference>
<dbReference type="EMBL" id="AB168161">
    <property type="protein sequence ID" value="BAE00286.1"/>
    <property type="status" value="ALT_FRAME"/>
    <property type="molecule type" value="mRNA"/>
</dbReference>
<dbReference type="SMR" id="A1XD95"/>
<dbReference type="STRING" id="9541.ENSMFAP00000023492"/>
<dbReference type="eggNOG" id="KOG2184">
    <property type="taxonomic scope" value="Eukaryota"/>
</dbReference>
<dbReference type="Proteomes" id="UP000233100">
    <property type="component" value="Unplaced"/>
</dbReference>
<dbReference type="GO" id="GO:0005737">
    <property type="term" value="C:cytoplasm"/>
    <property type="evidence" value="ECO:0007669"/>
    <property type="project" value="UniProtKB-SubCell"/>
</dbReference>
<dbReference type="GO" id="GO:0005681">
    <property type="term" value="C:spliceosomal complex"/>
    <property type="evidence" value="ECO:0000250"/>
    <property type="project" value="UniProtKB"/>
</dbReference>
<dbReference type="GO" id="GO:0071008">
    <property type="term" value="C:U2-type post-mRNA release spliceosomal complex"/>
    <property type="evidence" value="ECO:0000250"/>
    <property type="project" value="UniProtKB"/>
</dbReference>
<dbReference type="GO" id="GO:0003676">
    <property type="term" value="F:nucleic acid binding"/>
    <property type="evidence" value="ECO:0007669"/>
    <property type="project" value="InterPro"/>
</dbReference>
<dbReference type="GO" id="GO:0031214">
    <property type="term" value="P:biomineral tissue development"/>
    <property type="evidence" value="ECO:0007669"/>
    <property type="project" value="UniProtKB-KW"/>
</dbReference>
<dbReference type="GO" id="GO:0000390">
    <property type="term" value="P:spliceosomal complex disassembly"/>
    <property type="evidence" value="ECO:0000250"/>
    <property type="project" value="UniProtKB"/>
</dbReference>
<dbReference type="InterPro" id="IPR000467">
    <property type="entry name" value="G_patch_dom"/>
</dbReference>
<dbReference type="InterPro" id="IPR022783">
    <property type="entry name" value="GCFC_dom"/>
</dbReference>
<dbReference type="InterPro" id="IPR022159">
    <property type="entry name" value="STIP/TFIP11_N"/>
</dbReference>
<dbReference type="InterPro" id="IPR024933">
    <property type="entry name" value="TFP11"/>
</dbReference>
<dbReference type="InterPro" id="IPR045211">
    <property type="entry name" value="TFP11/STIP/Ntr1"/>
</dbReference>
<dbReference type="PANTHER" id="PTHR23329:SF1">
    <property type="entry name" value="TUFTELIN-INTERACTING PROTEIN 11"/>
    <property type="match status" value="1"/>
</dbReference>
<dbReference type="PANTHER" id="PTHR23329">
    <property type="entry name" value="TUFTELIN-INTERACTING PROTEIN 11-RELATED"/>
    <property type="match status" value="1"/>
</dbReference>
<dbReference type="Pfam" id="PF01585">
    <property type="entry name" value="G-patch"/>
    <property type="match status" value="1"/>
</dbReference>
<dbReference type="Pfam" id="PF07842">
    <property type="entry name" value="GCFC"/>
    <property type="match status" value="1"/>
</dbReference>
<dbReference type="Pfam" id="PF12457">
    <property type="entry name" value="TIP_N"/>
    <property type="match status" value="1"/>
</dbReference>
<dbReference type="PIRSF" id="PIRSF017706">
    <property type="entry name" value="TFIP11"/>
    <property type="match status" value="1"/>
</dbReference>
<dbReference type="SMART" id="SM00443">
    <property type="entry name" value="G_patch"/>
    <property type="match status" value="1"/>
</dbReference>
<dbReference type="PROSITE" id="PS50174">
    <property type="entry name" value="G_PATCH"/>
    <property type="match status" value="1"/>
</dbReference>
<proteinExistence type="evidence at transcript level"/>
<protein>
    <recommendedName>
        <fullName>Tuftelin-interacting protein 11</fullName>
    </recommendedName>
    <alternativeName>
        <fullName>Septin and tuftelin-interacting protein 1</fullName>
        <shortName>STIP-1</shortName>
    </alternativeName>
</protein>
<reference key="1">
    <citation type="journal article" date="2007" name="Exp. Cell Res.">
        <title>Characterization of STIP, a multi-domain nuclear protein, highly conserved in metazoans, and essential for embryogenesis in Caenorhabditis elegans.</title>
        <authorList>
            <person name="Ji Q."/>
            <person name="Huang C.-H."/>
            <person name="Peng J."/>
            <person name="Hashmi S."/>
            <person name="Ye T."/>
            <person name="Chen Y."/>
        </authorList>
    </citation>
    <scope>NUCLEOTIDE SEQUENCE [MRNA] (ISOFORM 1)</scope>
</reference>
<reference key="2">
    <citation type="submission" date="2005-06" db="EMBL/GenBank/DDBJ databases">
        <title>DNA sequences of macaque genes expressed in brain or testis and its evolutionary implications.</title>
        <authorList>
            <consortium name="International consortium for macaque cDNA sequencing and analysis"/>
        </authorList>
    </citation>
    <scope>NUCLEOTIDE SEQUENCE [LARGE SCALE MRNA] (ISOFORM 2)</scope>
    <source>
        <tissue>Testis</tissue>
    </source>
</reference>